<gene>
    <name evidence="1" type="primary">recX</name>
    <name type="ordered locus">SAR1963</name>
</gene>
<protein>
    <recommendedName>
        <fullName evidence="1">Regulatory protein RecX</fullName>
    </recommendedName>
</protein>
<evidence type="ECO:0000255" key="1">
    <source>
        <dbReference type="HAMAP-Rule" id="MF_01114"/>
    </source>
</evidence>
<sequence length="272" mass="32259">MPKITKIEVQKKNKERFNLFLDEQFEMGIDIDTLVKFNLKKGQQLEAADMAEIQKYDHYRIGLNKAIQYLSYKKRTEKEVIQYLQKEEISEQAISEVIEYCYREKLIDHQDYAESLKNTMIRTTDKGPKIYQQKLYQLGIEPNIIEMFTELYREQQELDDIIQIAEKISKTKKGPQNKVKEKVMQSLIQKGFEMETIHAVLNEMDFTQDEAVLDDLLQRDLEKIYNKNRKKYTQQKLISKTIEGLMRKGYKYDKIKAKLEESGIADGTEEIE</sequence>
<accession>Q6GFI4</accession>
<feature type="chain" id="PRO_0000162472" description="Regulatory protein RecX">
    <location>
        <begin position="1"/>
        <end position="272"/>
    </location>
</feature>
<organism>
    <name type="scientific">Staphylococcus aureus (strain MRSA252)</name>
    <dbReference type="NCBI Taxonomy" id="282458"/>
    <lineage>
        <taxon>Bacteria</taxon>
        <taxon>Bacillati</taxon>
        <taxon>Bacillota</taxon>
        <taxon>Bacilli</taxon>
        <taxon>Bacillales</taxon>
        <taxon>Staphylococcaceae</taxon>
        <taxon>Staphylococcus</taxon>
    </lineage>
</organism>
<proteinExistence type="inferred from homology"/>
<reference key="1">
    <citation type="journal article" date="2004" name="Proc. Natl. Acad. Sci. U.S.A.">
        <title>Complete genomes of two clinical Staphylococcus aureus strains: evidence for the rapid evolution of virulence and drug resistance.</title>
        <authorList>
            <person name="Holden M.T.G."/>
            <person name="Feil E.J."/>
            <person name="Lindsay J.A."/>
            <person name="Peacock S.J."/>
            <person name="Day N.P.J."/>
            <person name="Enright M.C."/>
            <person name="Foster T.J."/>
            <person name="Moore C.E."/>
            <person name="Hurst L."/>
            <person name="Atkin R."/>
            <person name="Barron A."/>
            <person name="Bason N."/>
            <person name="Bentley S.D."/>
            <person name="Chillingworth C."/>
            <person name="Chillingworth T."/>
            <person name="Churcher C."/>
            <person name="Clark L."/>
            <person name="Corton C."/>
            <person name="Cronin A."/>
            <person name="Doggett J."/>
            <person name="Dowd L."/>
            <person name="Feltwell T."/>
            <person name="Hance Z."/>
            <person name="Harris B."/>
            <person name="Hauser H."/>
            <person name="Holroyd S."/>
            <person name="Jagels K."/>
            <person name="James K.D."/>
            <person name="Lennard N."/>
            <person name="Line A."/>
            <person name="Mayes R."/>
            <person name="Moule S."/>
            <person name="Mungall K."/>
            <person name="Ormond D."/>
            <person name="Quail M.A."/>
            <person name="Rabbinowitsch E."/>
            <person name="Rutherford K.M."/>
            <person name="Sanders M."/>
            <person name="Sharp S."/>
            <person name="Simmonds M."/>
            <person name="Stevens K."/>
            <person name="Whitehead S."/>
            <person name="Barrell B.G."/>
            <person name="Spratt B.G."/>
            <person name="Parkhill J."/>
        </authorList>
    </citation>
    <scope>NUCLEOTIDE SEQUENCE [LARGE SCALE GENOMIC DNA]</scope>
    <source>
        <strain>MRSA252</strain>
    </source>
</reference>
<comment type="function">
    <text evidence="1">Modulates RecA activity.</text>
</comment>
<comment type="subcellular location">
    <subcellularLocation>
        <location evidence="1">Cytoplasm</location>
    </subcellularLocation>
</comment>
<comment type="similarity">
    <text evidence="1">Belongs to the RecX family.</text>
</comment>
<keyword id="KW-0963">Cytoplasm</keyword>
<dbReference type="EMBL" id="BX571856">
    <property type="protein sequence ID" value="CAG40950.1"/>
    <property type="molecule type" value="Genomic_DNA"/>
</dbReference>
<dbReference type="RefSeq" id="WP_001124422.1">
    <property type="nucleotide sequence ID" value="NC_002952.2"/>
</dbReference>
<dbReference type="SMR" id="Q6GFI4"/>
<dbReference type="KEGG" id="sar:SAR1963"/>
<dbReference type="HOGENOM" id="CLU_066607_4_0_9"/>
<dbReference type="Proteomes" id="UP000000596">
    <property type="component" value="Chromosome"/>
</dbReference>
<dbReference type="GO" id="GO:0005737">
    <property type="term" value="C:cytoplasm"/>
    <property type="evidence" value="ECO:0007669"/>
    <property type="project" value="UniProtKB-SubCell"/>
</dbReference>
<dbReference type="GO" id="GO:0006282">
    <property type="term" value="P:regulation of DNA repair"/>
    <property type="evidence" value="ECO:0007669"/>
    <property type="project" value="UniProtKB-UniRule"/>
</dbReference>
<dbReference type="Gene3D" id="1.10.10.10">
    <property type="entry name" value="Winged helix-like DNA-binding domain superfamily/Winged helix DNA-binding domain"/>
    <property type="match status" value="4"/>
</dbReference>
<dbReference type="HAMAP" id="MF_01114">
    <property type="entry name" value="RecX"/>
    <property type="match status" value="1"/>
</dbReference>
<dbReference type="InterPro" id="IPR053926">
    <property type="entry name" value="RecX_HTH_1st"/>
</dbReference>
<dbReference type="InterPro" id="IPR053925">
    <property type="entry name" value="RecX_HTH_3rd"/>
</dbReference>
<dbReference type="InterPro" id="IPR003783">
    <property type="entry name" value="Regulatory_RecX"/>
</dbReference>
<dbReference type="InterPro" id="IPR036388">
    <property type="entry name" value="WH-like_DNA-bd_sf"/>
</dbReference>
<dbReference type="NCBIfam" id="NF010733">
    <property type="entry name" value="PRK14135.1"/>
    <property type="match status" value="1"/>
</dbReference>
<dbReference type="PANTHER" id="PTHR33602">
    <property type="entry name" value="REGULATORY PROTEIN RECX FAMILY PROTEIN"/>
    <property type="match status" value="1"/>
</dbReference>
<dbReference type="PANTHER" id="PTHR33602:SF1">
    <property type="entry name" value="REGULATORY PROTEIN RECX FAMILY PROTEIN"/>
    <property type="match status" value="1"/>
</dbReference>
<dbReference type="Pfam" id="PF21982">
    <property type="entry name" value="RecX_HTH1"/>
    <property type="match status" value="1"/>
</dbReference>
<dbReference type="Pfam" id="PF21981">
    <property type="entry name" value="RecX_HTH3"/>
    <property type="match status" value="1"/>
</dbReference>
<name>RECX_STAAR</name>